<accession>P80012</accession>
<accession>Q28011</accession>
<comment type="function">
    <text>Important in the maintenance of hemostasis, it promotes adhesion of platelets to the sites of vascular injury by forming a molecular bridge between sub-endothelial collagen matrix and platelet-surface receptor complex GPIb-IX-V. Also acts as a chaperone for coagulation factor VIII, delivering it to the site of injury, stabilizing its heterodimeric structure and protecting it from premature clearance from plasma.</text>
</comment>
<comment type="subunit">
    <text evidence="1">Multimeric. Interacts with F8 (By similarity).</text>
</comment>
<comment type="subcellular location">
    <subcellularLocation>
        <location evidence="1">Secreted</location>
    </subcellularLocation>
    <subcellularLocation>
        <location evidence="1">Secreted</location>
        <location evidence="1">Extracellular space</location>
        <location evidence="1">Extracellular matrix</location>
    </subcellularLocation>
    <text evidence="1">Localized to storage granules.</text>
</comment>
<comment type="tissue specificity">
    <text>Plasma.</text>
</comment>
<comment type="domain">
    <text evidence="1">The propeptide is required for multimerization of vWF and for its targeting to storage granules.</text>
</comment>
<comment type="PTM">
    <text evidence="1">All cysteine residues are involved in intrachain or interchain disulfide bonds.</text>
</comment>
<comment type="PTM">
    <text evidence="1">N- and O-glycosylated.</text>
</comment>
<dbReference type="EMBL" id="Y09353">
    <property type="protein sequence ID" value="CAA70525.1"/>
    <property type="molecule type" value="mRNA"/>
</dbReference>
<dbReference type="EMBL" id="U28147">
    <property type="protein sequence ID" value="AAA96953.1"/>
    <property type="molecule type" value="mRNA"/>
</dbReference>
<dbReference type="RefSeq" id="NP_001192237.1">
    <property type="nucleotide sequence ID" value="NM_001205308.1"/>
</dbReference>
<dbReference type="SMR" id="P80012"/>
<dbReference type="FunCoup" id="P80012">
    <property type="interactions" value="217"/>
</dbReference>
<dbReference type="STRING" id="9913.ENSBTAP00000016273"/>
<dbReference type="MEROPS" id="I08.954"/>
<dbReference type="GlyCosmos" id="P80012">
    <property type="glycosylation" value="5 sites, No reported glycans"/>
</dbReference>
<dbReference type="GlyGen" id="P80012">
    <property type="glycosylation" value="5 sites"/>
</dbReference>
<dbReference type="PaxDb" id="9913-ENSBTAP00000016273"/>
<dbReference type="GeneID" id="280958"/>
<dbReference type="KEGG" id="bta:280958"/>
<dbReference type="CTD" id="7450"/>
<dbReference type="eggNOG" id="KOG1216">
    <property type="taxonomic scope" value="Eukaryota"/>
</dbReference>
<dbReference type="InParanoid" id="P80012"/>
<dbReference type="OrthoDB" id="6262482at2759"/>
<dbReference type="Proteomes" id="UP000009136">
    <property type="component" value="Unplaced"/>
</dbReference>
<dbReference type="GO" id="GO:0062023">
    <property type="term" value="C:collagen-containing extracellular matrix"/>
    <property type="evidence" value="ECO:0000250"/>
    <property type="project" value="UniProtKB"/>
</dbReference>
<dbReference type="GO" id="GO:0005783">
    <property type="term" value="C:endoplasmic reticulum"/>
    <property type="evidence" value="ECO:0000250"/>
    <property type="project" value="UniProtKB"/>
</dbReference>
<dbReference type="GO" id="GO:0031012">
    <property type="term" value="C:extracellular matrix"/>
    <property type="evidence" value="ECO:0000318"/>
    <property type="project" value="GO_Central"/>
</dbReference>
<dbReference type="GO" id="GO:0005576">
    <property type="term" value="C:extracellular region"/>
    <property type="evidence" value="ECO:0000250"/>
    <property type="project" value="UniProtKB"/>
</dbReference>
<dbReference type="GO" id="GO:0005615">
    <property type="term" value="C:extracellular space"/>
    <property type="evidence" value="ECO:0000318"/>
    <property type="project" value="GO_Central"/>
</dbReference>
<dbReference type="GO" id="GO:0033093">
    <property type="term" value="C:Weibel-Palade body"/>
    <property type="evidence" value="ECO:0000250"/>
    <property type="project" value="UniProtKB"/>
</dbReference>
<dbReference type="GO" id="GO:0005518">
    <property type="term" value="F:collagen binding"/>
    <property type="evidence" value="ECO:0000250"/>
    <property type="project" value="UniProtKB"/>
</dbReference>
<dbReference type="GO" id="GO:0042802">
    <property type="term" value="F:identical protein binding"/>
    <property type="evidence" value="ECO:0000250"/>
    <property type="project" value="UniProtKB"/>
</dbReference>
<dbReference type="GO" id="GO:0019865">
    <property type="term" value="F:immunoglobulin binding"/>
    <property type="evidence" value="ECO:0000250"/>
    <property type="project" value="UniProtKB"/>
</dbReference>
<dbReference type="GO" id="GO:0005178">
    <property type="term" value="F:integrin binding"/>
    <property type="evidence" value="ECO:0000250"/>
    <property type="project" value="UniProtKB"/>
</dbReference>
<dbReference type="GO" id="GO:0002020">
    <property type="term" value="F:protease binding"/>
    <property type="evidence" value="ECO:0000250"/>
    <property type="project" value="UniProtKB"/>
</dbReference>
<dbReference type="GO" id="GO:0051087">
    <property type="term" value="F:protein-folding chaperone binding"/>
    <property type="evidence" value="ECO:0000250"/>
    <property type="project" value="UniProtKB"/>
</dbReference>
<dbReference type="GO" id="GO:0007596">
    <property type="term" value="P:blood coagulation"/>
    <property type="evidence" value="ECO:0000250"/>
    <property type="project" value="UniProtKB"/>
</dbReference>
<dbReference type="GO" id="GO:0007155">
    <property type="term" value="P:cell adhesion"/>
    <property type="evidence" value="ECO:0000250"/>
    <property type="project" value="UniProtKB"/>
</dbReference>
<dbReference type="GO" id="GO:0031589">
    <property type="term" value="P:cell-substrate adhesion"/>
    <property type="evidence" value="ECO:0000250"/>
    <property type="project" value="UniProtKB"/>
</dbReference>
<dbReference type="GO" id="GO:0007599">
    <property type="term" value="P:hemostasis"/>
    <property type="evidence" value="ECO:0000250"/>
    <property type="project" value="UniProtKB"/>
</dbReference>
<dbReference type="GO" id="GO:0030168">
    <property type="term" value="P:platelet activation"/>
    <property type="evidence" value="ECO:0000250"/>
    <property type="project" value="UniProtKB"/>
</dbReference>
<dbReference type="CDD" id="cd19941">
    <property type="entry name" value="TIL"/>
    <property type="match status" value="2"/>
</dbReference>
<dbReference type="FunFam" id="2.10.25.10:FF:000674">
    <property type="entry name" value="Mucin-2"/>
    <property type="match status" value="1"/>
</dbReference>
<dbReference type="FunFam" id="2.10.25.10:FF:000444">
    <property type="entry name" value="von Willebrand factor"/>
    <property type="match status" value="1"/>
</dbReference>
<dbReference type="Gene3D" id="2.10.25.10">
    <property type="entry name" value="Laminin"/>
    <property type="match status" value="2"/>
</dbReference>
<dbReference type="InterPro" id="IPR050780">
    <property type="entry name" value="Mucin_vWF_Thrombospondin_sf"/>
</dbReference>
<dbReference type="InterPro" id="IPR036084">
    <property type="entry name" value="Ser_inhib-like_sf"/>
</dbReference>
<dbReference type="InterPro" id="IPR002919">
    <property type="entry name" value="TIL_dom"/>
</dbReference>
<dbReference type="InterPro" id="IPR014853">
    <property type="entry name" value="VWF/SSPO/ZAN-like_Cys-rich_dom"/>
</dbReference>
<dbReference type="InterPro" id="IPR001007">
    <property type="entry name" value="VWF_dom"/>
</dbReference>
<dbReference type="InterPro" id="IPR001846">
    <property type="entry name" value="VWF_type-D"/>
</dbReference>
<dbReference type="PANTHER" id="PTHR11339">
    <property type="entry name" value="EXTRACELLULAR MATRIX GLYCOPROTEIN RELATED"/>
    <property type="match status" value="1"/>
</dbReference>
<dbReference type="PANTHER" id="PTHR11339:SF361">
    <property type="entry name" value="VON WILLEBRAND FACTOR"/>
    <property type="match status" value="1"/>
</dbReference>
<dbReference type="Pfam" id="PF08742">
    <property type="entry name" value="C8"/>
    <property type="match status" value="2"/>
</dbReference>
<dbReference type="Pfam" id="PF01826">
    <property type="entry name" value="TIL"/>
    <property type="match status" value="2"/>
</dbReference>
<dbReference type="Pfam" id="PF00094">
    <property type="entry name" value="VWD"/>
    <property type="match status" value="3"/>
</dbReference>
<dbReference type="Pfam" id="PF23244">
    <property type="entry name" value="VWF"/>
    <property type="match status" value="2"/>
</dbReference>
<dbReference type="SMART" id="SM00832">
    <property type="entry name" value="C8"/>
    <property type="match status" value="2"/>
</dbReference>
<dbReference type="SMART" id="SM00215">
    <property type="entry name" value="VWC_out"/>
    <property type="match status" value="2"/>
</dbReference>
<dbReference type="SMART" id="SM00216">
    <property type="entry name" value="VWD"/>
    <property type="match status" value="2"/>
</dbReference>
<dbReference type="SUPFAM" id="SSF57603">
    <property type="entry name" value="FnI-like domain"/>
    <property type="match status" value="1"/>
</dbReference>
<dbReference type="SUPFAM" id="SSF57567">
    <property type="entry name" value="Serine protease inhibitors"/>
    <property type="match status" value="3"/>
</dbReference>
<dbReference type="PROSITE" id="PS51233">
    <property type="entry name" value="VWFD"/>
    <property type="match status" value="3"/>
</dbReference>
<reference key="1">
    <citation type="journal article" date="1997" name="Biochim. Biophys. Acta">
        <title>Primary structure of the propeptide and factor VIII-binding domain of bovine von Willebrand factor.</title>
        <authorList>
            <person name="Janel N."/>
            <person name="Ribba A.S."/>
            <person name="Cherel G."/>
            <person name="Kerbiriou-Nabias D."/>
            <person name="Meyer D."/>
        </authorList>
    </citation>
    <scope>NUCLEOTIDE SEQUENCE [MRNA]</scope>
</reference>
<reference key="2">
    <citation type="journal article" date="1995" name="Gene">
        <title>Comparison of the 5'-flanking sequences of the human and bovine von Willebrand factor-encoding genes reveals alternation of highly homologous domains with species-specific Alu-type repeats.</title>
        <authorList>
            <person name="Janel N."/>
            <person name="Schwachtgen J.L."/>
            <person name="Bakhshi M.R."/>
            <person name="Barek L."/>
            <person name="Meyer D."/>
            <person name="Kerbiriou-Nabias D."/>
        </authorList>
    </citation>
    <scope>NUCLEOTIDE SEQUENCE [MRNA] OF 1-177</scope>
</reference>
<reference key="3">
    <citation type="journal article" date="1991" name="Eur. J. Biochem.">
        <title>Monoclonal antibodies that inhibit binding of propolypeptide of von Willebrand factor to collagen. Localization of epitopes.</title>
        <authorList>
            <person name="Fujisawa T."/>
            <person name="Takagi J."/>
            <person name="Sekiya F."/>
            <person name="Goto A."/>
            <person name="Miake F."/>
            <person name="Saito Y."/>
        </authorList>
    </citation>
    <scope>PARTIAL PROTEIN SEQUENCE</scope>
</reference>
<reference key="4">
    <citation type="journal article" date="1995" name="Eur. J. Biochem.">
        <title>Identification of factor-XIIIa-reactive glutaminyl residues in the propolypeptide of bovine von Willebrand factor.</title>
        <authorList>
            <person name="Takagi J."/>
            <person name="Aoyama T."/>
            <person name="Ueki S."/>
            <person name="Ohba H."/>
            <person name="Saito Y."/>
            <person name="Lorand L."/>
        </authorList>
    </citation>
    <scope>PARTIAL PROTEIN SEQUENCE</scope>
</reference>
<reference key="5">
    <citation type="journal article" date="2003" name="J. Thromb. Haemost.">
        <title>von Willebrand factor, platelets and endothelial cell interactions.</title>
        <authorList>
            <person name="Ruggeri Z.M."/>
        </authorList>
    </citation>
    <scope>REVIEW</scope>
</reference>
<sequence length="937" mass="102599">MFPTRLARLLLAVALTLPGALCGEGALGKSSMARCSLFGADFINTFDESMYSFSGDCSYLLAGDCKTHSFSIVGDFQGGRRMGLSVYLGEFFDIHVFVNGTVLQGGQHVSMPYATRGLYLETEVGHHKLSSESYGFVARIDGSGNFQILLSDRHFNKTCGLCGDFNIFAEDDFRTQEGTLTSDPYDFANSWALSSEEQRCPRVSPPSSSCNVSSELQKGLWEKCQLLKTASVFARCHALVDPEPFVALCERMLCACAQGLRCPCPVLLEYARACAKQGMLLYGWADHSSCRPDCPTGMEYKECVSPCHRTCRSLSITEVCREQCVDGCSCPEGQLLDEGRCVESTECPCVHAGKPYPPGASLSRDCNTCICRNSQWVCSNEDCPGECLITGQSHFKSFDDRHFTFSGVCQYLLAQDCQDHSFSVVIETVQCADDPDAVCTRSVTVRLPSPHHGLLKLKHGGGVALDGQDVQIPLLQGDLRIQHTVTASLQLNFGEDLQIDWDGRGRLLLKLSPVYAGRTCGLCGNYNGNQRDDFLTPAGLVEPLVEHFGNSWKLRADCEDLQEQPSDPCSLNPRLTKFADQACAILTSPKFEACHSAVSPLPYLRNCRYDVCACSDGRDCLCDAVANYAAACARRGVHVGWREPSFCALSCPHGQVYQQCGTPCNLTCRSLSHPDEECTEVCLEGCFCPPGLFLDETGSCVPKAQCPCYYDGEIFQPEDIFSDHHTMCYCEDGFMHSATSGAPGSLLPEAVLSSPLSHRSKRSLSCRPPMVKVVCPADNPRAEGLECTKTCQNYDLECMSTGCVSGCLPAPGMVRHENRCVALERCPCFHQGREYAPGDRVKVDCNSCVCQDRKWNCTDHVCDASCSALGLAHYFTFDGLKYLFPGECQYVLVQDHCGSNPGTFRVLVGNEGCSVPSLKCRKRITILVEGGEIELFD</sequence>
<evidence type="ECO:0000250" key="1"/>
<evidence type="ECO:0000255" key="2"/>
<evidence type="ECO:0000255" key="3">
    <source>
        <dbReference type="PROSITE-ProRule" id="PRU00580"/>
    </source>
</evidence>
<evidence type="ECO:0000305" key="4"/>
<feature type="signal peptide" evidence="2">
    <location>
        <begin position="1"/>
        <end position="22"/>
    </location>
</feature>
<feature type="propeptide" id="PRO_0000022678" evidence="1">
    <location>
        <begin position="23"/>
        <end position="762"/>
    </location>
</feature>
<feature type="chain" id="PRO_0000022679" description="von Willebrand factor">
    <location>
        <begin position="763"/>
        <end position="937" status="greater than"/>
    </location>
</feature>
<feature type="domain" description="VWFD 1" evidence="3">
    <location>
        <begin position="33"/>
        <end position="201"/>
    </location>
</feature>
<feature type="domain" description="TIL 1">
    <location>
        <begin position="294"/>
        <end position="347"/>
    </location>
</feature>
<feature type="domain" description="VWFD 2" evidence="3">
    <location>
        <begin position="385"/>
        <end position="559"/>
    </location>
</feature>
<feature type="domain" description="TIL 2">
    <location>
        <begin position="651"/>
        <end position="706"/>
    </location>
</feature>
<feature type="domain" description="VWFD 3" evidence="3">
    <location>
        <begin position="864"/>
        <end position="937" status="greater than"/>
    </location>
</feature>
<feature type="region of interest" description="Amino-terminal">
    <location>
        <begin position="763"/>
        <end position="786"/>
    </location>
</feature>
<feature type="region of interest" description="E1">
    <location>
        <begin position="787"/>
        <end position="832"/>
    </location>
</feature>
<feature type="region of interest" description="CX">
    <location>
        <begin position="825"/>
        <end position="852"/>
    </location>
</feature>
<feature type="site" description="Factor XIIIa-binding">
    <location>
        <position position="410"/>
    </location>
</feature>
<feature type="site" description="Factor XIIIa-binding">
    <location>
        <position position="414"/>
    </location>
</feature>
<feature type="site" description="Factor XIIIa-binding">
    <location>
        <position position="605"/>
    </location>
</feature>
<feature type="glycosylation site" description="N-linked (GlcNAc...) asparagine" evidence="2">
    <location>
        <position position="99"/>
    </location>
</feature>
<feature type="glycosylation site" description="N-linked (GlcNAc...) asparagine" evidence="2">
    <location>
        <position position="156"/>
    </location>
</feature>
<feature type="glycosylation site" description="N-linked (GlcNAc...) asparagine" evidence="2">
    <location>
        <position position="211"/>
    </location>
</feature>
<feature type="glycosylation site" description="N-linked (GlcNAc...) asparagine" evidence="2">
    <location>
        <position position="665"/>
    </location>
</feature>
<feature type="glycosylation site" description="N-linked (GlcNAc...) asparagine" evidence="2">
    <location>
        <position position="856"/>
    </location>
</feature>
<feature type="disulfide bond" evidence="3">
    <location>
        <begin position="35"/>
        <end position="162"/>
    </location>
</feature>
<feature type="disulfide bond" evidence="3">
    <location>
        <begin position="57"/>
        <end position="200"/>
    </location>
</feature>
<feature type="disulfide bond" evidence="3">
    <location>
        <begin position="387"/>
        <end position="523"/>
    </location>
</feature>
<feature type="disulfide bond" evidence="3">
    <location>
        <begin position="409"/>
        <end position="558"/>
    </location>
</feature>
<feature type="disulfide bond" evidence="3">
    <location>
        <begin position="431"/>
        <end position="439"/>
    </location>
</feature>
<feature type="disulfide bond" evidence="1">
    <location>
        <begin position="766"/>
        <end position="807"/>
    </location>
</feature>
<feature type="disulfide bond" evidence="1">
    <location>
        <begin position="775"/>
        <end position="803"/>
    </location>
</feature>
<feature type="disulfide bond" evidence="3">
    <location>
        <begin position="913"/>
        <end position="920"/>
    </location>
</feature>
<feature type="sequence conflict" description="In Ref. 3; AA sequence." evidence="4" ref="3">
    <location>
        <position position="330"/>
    </location>
</feature>
<feature type="sequence conflict" description="In Ref. 4; AA sequence." evidence="4" ref="4">
    <location>
        <position position="523"/>
    </location>
</feature>
<feature type="sequence conflict" description="In Ref. 4; AA sequence." evidence="4" ref="4">
    <original>G</original>
    <variation>Q</variation>
    <location>
        <position position="528"/>
    </location>
</feature>
<feature type="non-terminal residue">
    <location>
        <position position="937"/>
    </location>
</feature>
<gene>
    <name type="primary">VWF</name>
    <name type="synonym">F8VWF</name>
</gene>
<proteinExistence type="evidence at protein level"/>
<name>VWF_BOVIN</name>
<protein>
    <recommendedName>
        <fullName>von Willebrand factor</fullName>
        <shortName>vWF</shortName>
    </recommendedName>
</protein>
<organism>
    <name type="scientific">Bos taurus</name>
    <name type="common">Bovine</name>
    <dbReference type="NCBI Taxonomy" id="9913"/>
    <lineage>
        <taxon>Eukaryota</taxon>
        <taxon>Metazoa</taxon>
        <taxon>Chordata</taxon>
        <taxon>Craniata</taxon>
        <taxon>Vertebrata</taxon>
        <taxon>Euteleostomi</taxon>
        <taxon>Mammalia</taxon>
        <taxon>Eutheria</taxon>
        <taxon>Laurasiatheria</taxon>
        <taxon>Artiodactyla</taxon>
        <taxon>Ruminantia</taxon>
        <taxon>Pecora</taxon>
        <taxon>Bovidae</taxon>
        <taxon>Bovinae</taxon>
        <taxon>Bos</taxon>
    </lineage>
</organism>
<keyword id="KW-0094">Blood coagulation</keyword>
<keyword id="KW-0130">Cell adhesion</keyword>
<keyword id="KW-0165">Cleavage on pair of basic residues</keyword>
<keyword id="KW-0903">Direct protein sequencing</keyword>
<keyword id="KW-1015">Disulfide bond</keyword>
<keyword id="KW-0272">Extracellular matrix</keyword>
<keyword id="KW-0325">Glycoprotein</keyword>
<keyword id="KW-0356">Hemostasis</keyword>
<keyword id="KW-1185">Reference proteome</keyword>
<keyword id="KW-0677">Repeat</keyword>
<keyword id="KW-0964">Secreted</keyword>
<keyword id="KW-0732">Signal</keyword>